<organism>
    <name type="scientific">Psychrobacter cryohalolentis (strain ATCC BAA-1226 / DSM 17306 / VKM B-2378 / K5)</name>
    <dbReference type="NCBI Taxonomy" id="335284"/>
    <lineage>
        <taxon>Bacteria</taxon>
        <taxon>Pseudomonadati</taxon>
        <taxon>Pseudomonadota</taxon>
        <taxon>Gammaproteobacteria</taxon>
        <taxon>Moraxellales</taxon>
        <taxon>Moraxellaceae</taxon>
        <taxon>Psychrobacter</taxon>
    </lineage>
</organism>
<evidence type="ECO:0000255" key="1">
    <source>
        <dbReference type="HAMAP-Rule" id="MF_00711"/>
    </source>
</evidence>
<accession>Q1QCL7</accession>
<reference key="1">
    <citation type="submission" date="2006-03" db="EMBL/GenBank/DDBJ databases">
        <title>Complete sequence of chromosome of Psychrobacter cryohalolentis K5.</title>
        <authorList>
            <consortium name="US DOE Joint Genome Institute"/>
            <person name="Copeland A."/>
            <person name="Lucas S."/>
            <person name="Lapidus A."/>
            <person name="Barry K."/>
            <person name="Detter J.C."/>
            <person name="Glavina T."/>
            <person name="Hammon N."/>
            <person name="Israni S."/>
            <person name="Dalin E."/>
            <person name="Tice H."/>
            <person name="Pitluck S."/>
            <person name="Brettin T."/>
            <person name="Bruce D."/>
            <person name="Han C."/>
            <person name="Tapia R."/>
            <person name="Sims D.R."/>
            <person name="Gilna P."/>
            <person name="Schmutz J."/>
            <person name="Larimer F."/>
            <person name="Land M."/>
            <person name="Hauser L."/>
            <person name="Kyrpides N."/>
            <person name="Kim E."/>
            <person name="Richardson P."/>
        </authorList>
    </citation>
    <scope>NUCLEOTIDE SEQUENCE [LARGE SCALE GENOMIC DNA]</scope>
    <source>
        <strain>ATCC BAA-1226 / DSM 17306 / VKM B-2378 / K5</strain>
    </source>
</reference>
<keyword id="KW-0560">Oxidoreductase</keyword>
<keyword id="KW-0663">Pyridoxal phosphate</keyword>
<feature type="chain" id="PRO_1000045596" description="Glycine dehydrogenase (decarboxylating)">
    <location>
        <begin position="1"/>
        <end position="965"/>
    </location>
</feature>
<feature type="modified residue" description="N6-(pyridoxal phosphate)lysine" evidence="1">
    <location>
        <position position="711"/>
    </location>
</feature>
<dbReference type="EC" id="1.4.4.2" evidence="1"/>
<dbReference type="EMBL" id="CP000323">
    <property type="protein sequence ID" value="ABE74586.1"/>
    <property type="molecule type" value="Genomic_DNA"/>
</dbReference>
<dbReference type="RefSeq" id="WP_011513150.1">
    <property type="nucleotide sequence ID" value="NC_007969.1"/>
</dbReference>
<dbReference type="SMR" id="Q1QCL7"/>
<dbReference type="STRING" id="335284.Pcryo_0803"/>
<dbReference type="KEGG" id="pcr:Pcryo_0803"/>
<dbReference type="eggNOG" id="COG0403">
    <property type="taxonomic scope" value="Bacteria"/>
</dbReference>
<dbReference type="eggNOG" id="COG1003">
    <property type="taxonomic scope" value="Bacteria"/>
</dbReference>
<dbReference type="HOGENOM" id="CLU_004620_2_1_6"/>
<dbReference type="Proteomes" id="UP000002425">
    <property type="component" value="Chromosome"/>
</dbReference>
<dbReference type="GO" id="GO:0005829">
    <property type="term" value="C:cytosol"/>
    <property type="evidence" value="ECO:0007669"/>
    <property type="project" value="TreeGrafter"/>
</dbReference>
<dbReference type="GO" id="GO:0005960">
    <property type="term" value="C:glycine cleavage complex"/>
    <property type="evidence" value="ECO:0007669"/>
    <property type="project" value="TreeGrafter"/>
</dbReference>
<dbReference type="GO" id="GO:0016594">
    <property type="term" value="F:glycine binding"/>
    <property type="evidence" value="ECO:0007669"/>
    <property type="project" value="TreeGrafter"/>
</dbReference>
<dbReference type="GO" id="GO:0004375">
    <property type="term" value="F:glycine dehydrogenase (decarboxylating) activity"/>
    <property type="evidence" value="ECO:0007669"/>
    <property type="project" value="UniProtKB-EC"/>
</dbReference>
<dbReference type="GO" id="GO:0030170">
    <property type="term" value="F:pyridoxal phosphate binding"/>
    <property type="evidence" value="ECO:0007669"/>
    <property type="project" value="TreeGrafter"/>
</dbReference>
<dbReference type="GO" id="GO:0019464">
    <property type="term" value="P:glycine decarboxylation via glycine cleavage system"/>
    <property type="evidence" value="ECO:0007669"/>
    <property type="project" value="UniProtKB-UniRule"/>
</dbReference>
<dbReference type="FunFam" id="3.40.640.10:FF:000005">
    <property type="entry name" value="Glycine dehydrogenase (decarboxylating), mitochondrial"/>
    <property type="match status" value="1"/>
</dbReference>
<dbReference type="FunFam" id="3.40.640.10:FF:000007">
    <property type="entry name" value="glycine dehydrogenase (Decarboxylating), mitochondrial"/>
    <property type="match status" value="1"/>
</dbReference>
<dbReference type="Gene3D" id="3.90.1150.10">
    <property type="entry name" value="Aspartate Aminotransferase, domain 1"/>
    <property type="match status" value="2"/>
</dbReference>
<dbReference type="Gene3D" id="3.40.640.10">
    <property type="entry name" value="Type I PLP-dependent aspartate aminotransferase-like (Major domain)"/>
    <property type="match status" value="2"/>
</dbReference>
<dbReference type="HAMAP" id="MF_00711">
    <property type="entry name" value="GcvP"/>
    <property type="match status" value="1"/>
</dbReference>
<dbReference type="InterPro" id="IPR000192">
    <property type="entry name" value="Aminotrans_V_dom"/>
</dbReference>
<dbReference type="InterPro" id="IPR003437">
    <property type="entry name" value="GcvP"/>
</dbReference>
<dbReference type="InterPro" id="IPR049316">
    <property type="entry name" value="GDC-P_C"/>
</dbReference>
<dbReference type="InterPro" id="IPR049315">
    <property type="entry name" value="GDC-P_N"/>
</dbReference>
<dbReference type="InterPro" id="IPR020581">
    <property type="entry name" value="GDC_P"/>
</dbReference>
<dbReference type="InterPro" id="IPR015424">
    <property type="entry name" value="PyrdxlP-dep_Trfase"/>
</dbReference>
<dbReference type="InterPro" id="IPR015421">
    <property type="entry name" value="PyrdxlP-dep_Trfase_major"/>
</dbReference>
<dbReference type="InterPro" id="IPR015422">
    <property type="entry name" value="PyrdxlP-dep_Trfase_small"/>
</dbReference>
<dbReference type="NCBIfam" id="TIGR00461">
    <property type="entry name" value="gcvP"/>
    <property type="match status" value="1"/>
</dbReference>
<dbReference type="NCBIfam" id="NF003346">
    <property type="entry name" value="PRK04366.1"/>
    <property type="match status" value="1"/>
</dbReference>
<dbReference type="PANTHER" id="PTHR11773:SF13">
    <property type="entry name" value="GLYCINE DEHYDROGENASE (DECARBOXYLATING)"/>
    <property type="match status" value="1"/>
</dbReference>
<dbReference type="PANTHER" id="PTHR11773">
    <property type="entry name" value="GLYCINE DEHYDROGENASE, DECARBOXYLATING"/>
    <property type="match status" value="1"/>
</dbReference>
<dbReference type="Pfam" id="PF00266">
    <property type="entry name" value="Aminotran_5"/>
    <property type="match status" value="1"/>
</dbReference>
<dbReference type="Pfam" id="PF21478">
    <property type="entry name" value="GcvP2_C"/>
    <property type="match status" value="1"/>
</dbReference>
<dbReference type="Pfam" id="PF02347">
    <property type="entry name" value="GDC-P"/>
    <property type="match status" value="1"/>
</dbReference>
<dbReference type="SUPFAM" id="SSF53383">
    <property type="entry name" value="PLP-dependent transferases"/>
    <property type="match status" value="2"/>
</dbReference>
<sequence>MTISQNPALDTFEGLFNEAEFVYRHLGSNDAKQADLLSAIGYSDMATFINETVPEPVRLHKELDLPVAMSEHAALAKLRTMADDITVNKSYIGQGYSPVRMPAVIQRNVLENPGWYTAYTPYQAEIAQGRLEALLNFQQVCIDLTGLELAGASLLDEATAAAEAMAMSKRVSKSKSMQFFVDDRVYPQTLDVINTRAKYFGWEVVVGDFELAKSGDYFGALFQYVGVEGDVKDLTDVIAAVKKNKTYVSVVSDIMSLVLLKSPADMGADVALGSTQRFGIPMGFGGPHAAYFAFSDKAKRSAPGRIIGVSKDSQGNTALRMALQTREQHIRREKANSNICTSQVLLANLAGMYAVYHGPGGVKRIATRIHAFATAFADVIKNANDSNLNVLHDQFFDSVVVDCGSEKLASQIFQNADNVGYNLWRLGETKLSVAFSETSDQKDFNVLTQLFVTKAHDLPEDARVSLDSAHLRTDAILSHPVFNSHHTEHEMLRYLKSLEDKDLAMNRSMISLGSCTMKLNATSEMLPITWPEFANVHPFAPRDQVTGYVAMIDSLQEQLKAITGFDDVSMQPNSGASGEYAGLLAIRRYHESLGETDRDVCLIPMSAHGTNPATAMMMGMKVVVVKTDDNGNVDIDDLTAKSEEHSTRLGALMITYPSTHGVFEEGIRKICDLIHKHGGQVYMDGANMNAQVGMMQPADVGADVLHMNLHKTFCIPHGGGGPGMGPIGMKAHLAPFMANHTLSPVHNAQKDCSAVSAAPYGSASILPISWMYIAMMGRDGLLKATELALLNANYVAAELKDHYPVLYTGKNGRVAHECIIDIRPLKEETGISESDIAKRLMDYGFHSPTMSFPVAGTLMIEPTESESKEELDRFISALKSIKAEALKAKAGEDNWTLENNPLVNAPHTAAMVIDGEWTYPYSRETAAFPLPYIRTNKFWPSVARVDDAYGDKNLMCSCPSIENYM</sequence>
<comment type="function">
    <text evidence="1">The glycine cleavage system catalyzes the degradation of glycine. The P protein binds the alpha-amino group of glycine through its pyridoxal phosphate cofactor; CO(2) is released and the remaining methylamine moiety is then transferred to the lipoamide cofactor of the H protein.</text>
</comment>
<comment type="catalytic activity">
    <reaction evidence="1">
        <text>N(6)-[(R)-lipoyl]-L-lysyl-[glycine-cleavage complex H protein] + glycine + H(+) = N(6)-[(R)-S(8)-aminomethyldihydrolipoyl]-L-lysyl-[glycine-cleavage complex H protein] + CO2</text>
        <dbReference type="Rhea" id="RHEA:24304"/>
        <dbReference type="Rhea" id="RHEA-COMP:10494"/>
        <dbReference type="Rhea" id="RHEA-COMP:10495"/>
        <dbReference type="ChEBI" id="CHEBI:15378"/>
        <dbReference type="ChEBI" id="CHEBI:16526"/>
        <dbReference type="ChEBI" id="CHEBI:57305"/>
        <dbReference type="ChEBI" id="CHEBI:83099"/>
        <dbReference type="ChEBI" id="CHEBI:83143"/>
        <dbReference type="EC" id="1.4.4.2"/>
    </reaction>
</comment>
<comment type="cofactor">
    <cofactor evidence="1">
        <name>pyridoxal 5'-phosphate</name>
        <dbReference type="ChEBI" id="CHEBI:597326"/>
    </cofactor>
</comment>
<comment type="subunit">
    <text evidence="1">The glycine cleavage system is composed of four proteins: P, T, L and H.</text>
</comment>
<comment type="similarity">
    <text evidence="1">Belongs to the GcvP family.</text>
</comment>
<name>GCSP_PSYCK</name>
<protein>
    <recommendedName>
        <fullName evidence="1">Glycine dehydrogenase (decarboxylating)</fullName>
        <ecNumber evidence="1">1.4.4.2</ecNumber>
    </recommendedName>
    <alternativeName>
        <fullName evidence="1">Glycine cleavage system P-protein</fullName>
    </alternativeName>
    <alternativeName>
        <fullName evidence="1">Glycine decarboxylase</fullName>
    </alternativeName>
    <alternativeName>
        <fullName evidence="1">Glycine dehydrogenase (aminomethyl-transferring)</fullName>
    </alternativeName>
</protein>
<proteinExistence type="inferred from homology"/>
<gene>
    <name evidence="1" type="primary">gcvP</name>
    <name type="ordered locus">Pcryo_0803</name>
</gene>